<comment type="function">
    <text evidence="1">Catalyzes the polymerization of lipoteichoic acid (LTA) polyglycerol phosphate, a reaction that presumably uses phosphatidylglycerol (PG) as substrate. Is required for staphylococcal growth and cell division process (By similarity).</text>
</comment>
<comment type="pathway">
    <text>Cell wall biogenesis; lipoteichoic acid biosynthesis.</text>
</comment>
<comment type="subcellular location">
    <subcellularLocation>
        <location evidence="5">Cell membrane</location>
        <topology evidence="5">Multi-pass membrane protein</topology>
    </subcellularLocation>
</comment>
<comment type="subcellular location">
    <molecule>Processed glycerol phosphate lipoteichoic acid synthase</molecule>
    <subcellularLocation>
        <location evidence="1">Secreted</location>
    </subcellularLocation>
</comment>
<comment type="PTM">
    <text evidence="1">Proteolytically cleaved.</text>
</comment>
<comment type="similarity">
    <text evidence="5">Belongs to the LTA synthase family.</text>
</comment>
<sequence>MSSQKKKISLFAFFLLTVITITLKTYFSYYVDFSLGVKGLVQNLILLMNPYSLVALVLSVFLFFKGKKAFWFMFIGGFLLTFLLYANVVYFRFFSDFLTFSTLNQVGNVESMGGAVSASFKWYDFVYFIDTLVYLFILIFKTKWLDTKAFSKKFVPVVMAASVALFFLNLAFAETDRPELLTRTFDHKYLVKYLGPYNFTVYDGVKTIENNQQKALASEDDLTKVLNYTKQRQTEPNPEYYGVAKKKNIIKIHLESFQTFLINKKVNGKEVTPFLNKLSSGKEQFTYFPNFFHQTGQGKTSDSEFTMDNSLYGLPQGSAFSLKGDNTYQSLPAILDQKQGYKSDVMHGDYKTFWNRDQVYKHFGIDKFYDATYYDMSDKNVVNLGLKDKIFFKDSANYQAKMKSPFYSHLITLTNHYPFTLDEKDATIEKSNTGDATVDGYIQTARYLDEALEEYINDLKKKGLYDNSVIMIYGDHYGISENHNNAMEKLLGEKITPAKFTDLNRTGFWIKIPGKSGGINNEYAGQVDVMPTILHLAGIDTKNYLMFGTDLFSKGHNQVVPFRNGDFITKDYKYVNGKIYSNKNNELITTQPADFEKNKKQVEKDLEMSDNVLNGDLFRFYKNPDFKKVNPSKYKYETGPKANSKK</sequence>
<feature type="chain" id="PRO_0000305360" description="Glycerol phosphate lipoteichoic acid synthase">
    <location>
        <begin position="1"/>
        <end position="217"/>
    </location>
</feature>
<feature type="chain" id="PRO_0000305361" description="Processed glycerol phosphate lipoteichoic acid synthase">
    <location>
        <begin position="218"/>
        <end position="646"/>
    </location>
</feature>
<feature type="topological domain" description="Cytoplasmic" evidence="2">
    <location>
        <begin position="1"/>
        <end position="7"/>
    </location>
</feature>
<feature type="transmembrane region" description="Helical" evidence="2">
    <location>
        <begin position="8"/>
        <end position="28"/>
    </location>
</feature>
<feature type="topological domain" description="Extracellular" evidence="2">
    <location>
        <begin position="29"/>
        <end position="43"/>
    </location>
</feature>
<feature type="transmembrane region" description="Helical" evidence="2">
    <location>
        <begin position="44"/>
        <end position="64"/>
    </location>
</feature>
<feature type="topological domain" description="Cytoplasmic" evidence="2">
    <location>
        <begin position="65"/>
        <end position="68"/>
    </location>
</feature>
<feature type="transmembrane region" description="Helical" evidence="2">
    <location>
        <begin position="69"/>
        <end position="89"/>
    </location>
</feature>
<feature type="topological domain" description="Extracellular" evidence="2">
    <location>
        <begin position="90"/>
        <end position="119"/>
    </location>
</feature>
<feature type="transmembrane region" description="Helical" evidence="2">
    <location>
        <begin position="120"/>
        <end position="140"/>
    </location>
</feature>
<feature type="topological domain" description="Cytoplasmic" evidence="2">
    <location>
        <begin position="141"/>
        <end position="153"/>
    </location>
</feature>
<feature type="transmembrane region" description="Helical" evidence="2">
    <location>
        <begin position="154"/>
        <end position="174"/>
    </location>
</feature>
<feature type="topological domain" description="Extracellular" evidence="2">
    <location>
        <begin position="175"/>
        <end position="646"/>
    </location>
</feature>
<feature type="region of interest" description="Disordered" evidence="3">
    <location>
        <begin position="623"/>
        <end position="646"/>
    </location>
</feature>
<feature type="compositionally biased region" description="Basic and acidic residues" evidence="3">
    <location>
        <begin position="623"/>
        <end position="638"/>
    </location>
</feature>
<feature type="active site" evidence="4">
    <location>
        <position position="300"/>
    </location>
</feature>
<feature type="binding site">
    <location>
        <position position="255"/>
    </location>
    <ligand>
        <name>Mn(2+)</name>
        <dbReference type="ChEBI" id="CHEBI:29035"/>
    </ligand>
</feature>
<feature type="binding site">
    <location>
        <position position="300"/>
    </location>
    <ligand>
        <name>Mn(2+)</name>
        <dbReference type="ChEBI" id="CHEBI:29035"/>
    </ligand>
</feature>
<feature type="binding site">
    <location>
        <position position="416"/>
    </location>
    <ligand>
        <name>substrate</name>
    </ligand>
</feature>
<feature type="binding site">
    <location>
        <position position="475"/>
    </location>
    <ligand>
        <name>Mn(2+)</name>
        <dbReference type="ChEBI" id="CHEBI:29035"/>
    </ligand>
</feature>
<feature type="binding site">
    <location>
        <position position="476"/>
    </location>
    <ligand>
        <name>Mn(2+)</name>
        <dbReference type="ChEBI" id="CHEBI:29035"/>
    </ligand>
</feature>
<feature type="site" description="Cleavage" evidence="1">
    <location>
        <begin position="217"/>
        <end position="218"/>
    </location>
</feature>
<feature type="mutagenesis site" description="No activity." evidence="4">
    <original>E</original>
    <variation>A</variation>
    <location>
        <position position="255"/>
    </location>
</feature>
<feature type="mutagenesis site" description="Reduced activity." evidence="4">
    <original>G</original>
    <variation>A</variation>
    <location>
        <position position="298"/>
    </location>
</feature>
<feature type="mutagenesis site" description="No activity." evidence="4">
    <original>T</original>
    <variation>A</variation>
    <variation>V</variation>
    <location>
        <position position="300"/>
    </location>
</feature>
<feature type="mutagenesis site" description="Retained activity." evidence="4">
    <original>H</original>
    <variation>A</variation>
    <location>
        <position position="409"/>
    </location>
</feature>
<feature type="mutagenesis site" description="No activity." evidence="4">
    <original>H</original>
    <variation>A</variation>
    <location>
        <position position="416"/>
    </location>
</feature>
<feature type="mutagenesis site" description="No activity." evidence="4">
    <original>D</original>
    <variation>A</variation>
    <location>
        <position position="475"/>
    </location>
</feature>
<feature type="mutagenesis site" description="No activity." evidence="4">
    <original>H</original>
    <variation>A</variation>
    <location>
        <position position="476"/>
    </location>
</feature>
<feature type="helix" evidence="6">
    <location>
        <begin position="219"/>
        <end position="228"/>
    </location>
</feature>
<feature type="turn" evidence="6">
    <location>
        <begin position="229"/>
        <end position="232"/>
    </location>
</feature>
<feature type="turn" evidence="6">
    <location>
        <begin position="238"/>
        <end position="246"/>
    </location>
</feature>
<feature type="strand" evidence="6">
    <location>
        <begin position="249"/>
        <end position="254"/>
    </location>
</feature>
<feature type="helix" evidence="6">
    <location>
        <begin position="259"/>
        <end position="261"/>
    </location>
</feature>
<feature type="strand" evidence="6">
    <location>
        <begin position="269"/>
        <end position="272"/>
    </location>
</feature>
<feature type="helix" evidence="6">
    <location>
        <begin position="273"/>
        <end position="279"/>
    </location>
</feature>
<feature type="strand" evidence="6">
    <location>
        <begin position="286"/>
        <end position="288"/>
    </location>
</feature>
<feature type="turn" evidence="6">
    <location>
        <begin position="297"/>
        <end position="299"/>
    </location>
</feature>
<feature type="helix" evidence="6">
    <location>
        <begin position="300"/>
        <end position="309"/>
    </location>
</feature>
<feature type="strand" evidence="6">
    <location>
        <begin position="315"/>
        <end position="317"/>
    </location>
</feature>
<feature type="helix" evidence="6">
    <location>
        <begin position="319"/>
        <end position="322"/>
    </location>
</feature>
<feature type="helix" evidence="6">
    <location>
        <begin position="331"/>
        <end position="339"/>
    </location>
</feature>
<feature type="strand" evidence="6">
    <location>
        <begin position="342"/>
        <end position="349"/>
    </location>
</feature>
<feature type="helix" evidence="6">
    <location>
        <begin position="353"/>
        <end position="355"/>
    </location>
</feature>
<feature type="helix" evidence="6">
    <location>
        <begin position="356"/>
        <end position="363"/>
    </location>
</feature>
<feature type="strand" evidence="6">
    <location>
        <begin position="367"/>
        <end position="369"/>
    </location>
</feature>
<feature type="helix" evidence="6">
    <location>
        <begin position="371"/>
        <end position="373"/>
    </location>
</feature>
<feature type="helix" evidence="6">
    <location>
        <begin position="378"/>
        <end position="380"/>
    </location>
</feature>
<feature type="helix" evidence="6">
    <location>
        <begin position="388"/>
        <end position="400"/>
    </location>
</feature>
<feature type="strand" evidence="6">
    <location>
        <begin position="404"/>
        <end position="411"/>
    </location>
</feature>
<feature type="helix" evidence="6">
    <location>
        <begin position="423"/>
        <end position="425"/>
    </location>
</feature>
<feature type="helix" evidence="6">
    <location>
        <begin position="436"/>
        <end position="461"/>
    </location>
</feature>
<feature type="strand" evidence="6">
    <location>
        <begin position="468"/>
        <end position="474"/>
    </location>
</feature>
<feature type="helix" evidence="6">
    <location>
        <begin position="481"/>
        <end position="483"/>
    </location>
</feature>
<feature type="helix" evidence="6">
    <location>
        <begin position="484"/>
        <end position="491"/>
    </location>
</feature>
<feature type="helix" evidence="6">
    <location>
        <begin position="497"/>
        <end position="502"/>
    </location>
</feature>
<feature type="strand" evidence="6">
    <location>
        <begin position="508"/>
        <end position="511"/>
    </location>
</feature>
<feature type="helix" evidence="6">
    <location>
        <begin position="526"/>
        <end position="528"/>
    </location>
</feature>
<feature type="helix" evidence="6">
    <location>
        <begin position="529"/>
        <end position="537"/>
    </location>
</feature>
<feature type="strand" evidence="6">
    <location>
        <begin position="559"/>
        <end position="561"/>
    </location>
</feature>
<feature type="strand" evidence="6">
    <location>
        <begin position="567"/>
        <end position="575"/>
    </location>
</feature>
<feature type="strand" evidence="6">
    <location>
        <begin position="578"/>
        <end position="581"/>
    </location>
</feature>
<feature type="turn" evidence="6">
    <location>
        <begin position="582"/>
        <end position="584"/>
    </location>
</feature>
<feature type="helix" evidence="6">
    <location>
        <begin position="595"/>
        <end position="615"/>
    </location>
</feature>
<feature type="helix" evidence="6">
    <location>
        <begin position="617"/>
        <end position="620"/>
    </location>
</feature>
<feature type="helix" evidence="6">
    <location>
        <begin position="631"/>
        <end position="633"/>
    </location>
</feature>
<name>LTAS_STAAW</name>
<keyword id="KW-0002">3D-structure</keyword>
<keyword id="KW-1003">Cell membrane</keyword>
<keyword id="KW-0961">Cell wall biogenesis/degradation</keyword>
<keyword id="KW-0464">Manganese</keyword>
<keyword id="KW-0472">Membrane</keyword>
<keyword id="KW-0479">Metal-binding</keyword>
<keyword id="KW-0964">Secreted</keyword>
<keyword id="KW-0808">Transferase</keyword>
<keyword id="KW-0812">Transmembrane</keyword>
<keyword id="KW-1133">Transmembrane helix</keyword>
<reference key="1">
    <citation type="journal article" date="2002" name="Lancet">
        <title>Genome and virulence determinants of high virulence community-acquired MRSA.</title>
        <authorList>
            <person name="Baba T."/>
            <person name="Takeuchi F."/>
            <person name="Kuroda M."/>
            <person name="Yuzawa H."/>
            <person name="Aoki K."/>
            <person name="Oguchi A."/>
            <person name="Nagai Y."/>
            <person name="Iwama N."/>
            <person name="Asano K."/>
            <person name="Naimi T."/>
            <person name="Kuroda H."/>
            <person name="Cui L."/>
            <person name="Yamamoto K."/>
            <person name="Hiramatsu K."/>
        </authorList>
    </citation>
    <scope>NUCLEOTIDE SEQUENCE [LARGE SCALE GENOMIC DNA]</scope>
    <source>
        <strain>MW2</strain>
    </source>
</reference>
<reference key="2">
    <citation type="journal article" date="2009" name="Proc. Natl. Acad. Sci. U.S.A.">
        <title>Structure-based mechanism of lipoteichoic acid synthesis by Staphylococcus aureus LtaS.</title>
        <authorList>
            <person name="Lu D."/>
            <person name="Wormann M.E."/>
            <person name="Zhang X."/>
            <person name="Schneewind O."/>
            <person name="Grundling A."/>
            <person name="Freemont P.S."/>
        </authorList>
    </citation>
    <scope>X-RAY CRYSTALLOGRAPHY (1.2 ANGSTROMS) OF 218-641</scope>
    <scope>ALONE AND IN COMPLEX WITH GLYCEROL-PHOSPHATE</scope>
    <scope>ACTIVE SITE</scope>
    <scope>METAL-BINDING SITES</scope>
    <scope>MUTAGENESIS OF GLU-255; GLY-298; THR-300; HIS-409; HIS-416; ASP-475 AND HIS-476</scope>
</reference>
<dbReference type="EC" id="2.7.8.-"/>
<dbReference type="EMBL" id="BA000033">
    <property type="protein sequence ID" value="BAB94546.1"/>
    <property type="molecule type" value="Genomic_DNA"/>
</dbReference>
<dbReference type="RefSeq" id="WP_000098285.1">
    <property type="nucleotide sequence ID" value="NC_003923.1"/>
</dbReference>
<dbReference type="PDB" id="2W5Q">
    <property type="method" value="X-ray"/>
    <property type="resolution" value="1.20 A"/>
    <property type="chains" value="A=218-641"/>
</dbReference>
<dbReference type="PDB" id="2W5R">
    <property type="method" value="X-ray"/>
    <property type="resolution" value="1.70 A"/>
    <property type="chains" value="A=218-641"/>
</dbReference>
<dbReference type="PDB" id="2W5S">
    <property type="method" value="X-ray"/>
    <property type="resolution" value="2.10 A"/>
    <property type="chains" value="A=218-641"/>
</dbReference>
<dbReference type="PDB" id="2W5T">
    <property type="method" value="X-ray"/>
    <property type="resolution" value="1.60 A"/>
    <property type="chains" value="A=218-641"/>
</dbReference>
<dbReference type="PDBsum" id="2W5Q"/>
<dbReference type="PDBsum" id="2W5R"/>
<dbReference type="PDBsum" id="2W5S"/>
<dbReference type="PDBsum" id="2W5T"/>
<dbReference type="SMR" id="Q7A1I3"/>
<dbReference type="KEGG" id="sam:MW0681"/>
<dbReference type="HOGENOM" id="CLU_021310_0_0_9"/>
<dbReference type="UniPathway" id="UPA00556"/>
<dbReference type="EvolutionaryTrace" id="Q7A1I3"/>
<dbReference type="GO" id="GO:0005576">
    <property type="term" value="C:extracellular region"/>
    <property type="evidence" value="ECO:0007669"/>
    <property type="project" value="UniProtKB-SubCell"/>
</dbReference>
<dbReference type="GO" id="GO:0005886">
    <property type="term" value="C:plasma membrane"/>
    <property type="evidence" value="ECO:0007669"/>
    <property type="project" value="UniProtKB-SubCell"/>
</dbReference>
<dbReference type="GO" id="GO:0046872">
    <property type="term" value="F:metal ion binding"/>
    <property type="evidence" value="ECO:0007669"/>
    <property type="project" value="UniProtKB-KW"/>
</dbReference>
<dbReference type="GO" id="GO:0016740">
    <property type="term" value="F:transferase activity"/>
    <property type="evidence" value="ECO:0007669"/>
    <property type="project" value="UniProtKB-KW"/>
</dbReference>
<dbReference type="GO" id="GO:0071555">
    <property type="term" value="P:cell wall organization"/>
    <property type="evidence" value="ECO:0007669"/>
    <property type="project" value="UniProtKB-KW"/>
</dbReference>
<dbReference type="GO" id="GO:0070395">
    <property type="term" value="P:lipoteichoic acid biosynthetic process"/>
    <property type="evidence" value="ECO:0007669"/>
    <property type="project" value="UniProtKB-UniPathway"/>
</dbReference>
<dbReference type="CDD" id="cd16015">
    <property type="entry name" value="LTA_synthase"/>
    <property type="match status" value="1"/>
</dbReference>
<dbReference type="Gene3D" id="3.30.1120.170">
    <property type="match status" value="1"/>
</dbReference>
<dbReference type="Gene3D" id="3.40.720.10">
    <property type="entry name" value="Alkaline Phosphatase, subunit A"/>
    <property type="match status" value="1"/>
</dbReference>
<dbReference type="InterPro" id="IPR017850">
    <property type="entry name" value="Alkaline_phosphatase_core_sf"/>
</dbReference>
<dbReference type="InterPro" id="IPR012160">
    <property type="entry name" value="LtaS-like"/>
</dbReference>
<dbReference type="InterPro" id="IPR050448">
    <property type="entry name" value="OpgB/LTA_synthase_biosynth"/>
</dbReference>
<dbReference type="InterPro" id="IPR000917">
    <property type="entry name" value="Sulfatase_N"/>
</dbReference>
<dbReference type="PANTHER" id="PTHR47371">
    <property type="entry name" value="LIPOTEICHOIC ACID SYNTHASE"/>
    <property type="match status" value="1"/>
</dbReference>
<dbReference type="PANTHER" id="PTHR47371:SF3">
    <property type="entry name" value="PHOSPHOGLYCEROL TRANSFERASE I"/>
    <property type="match status" value="1"/>
</dbReference>
<dbReference type="Pfam" id="PF00884">
    <property type="entry name" value="Sulfatase"/>
    <property type="match status" value="1"/>
</dbReference>
<dbReference type="PIRSF" id="PIRSF005091">
    <property type="entry name" value="Mmb_sulf_HI1246"/>
    <property type="match status" value="1"/>
</dbReference>
<dbReference type="SUPFAM" id="SSF53649">
    <property type="entry name" value="Alkaline phosphatase-like"/>
    <property type="match status" value="1"/>
</dbReference>
<accession>Q7A1I3</accession>
<gene>
    <name type="primary">ltaS</name>
    <name type="ordered locus">MW0681</name>
</gene>
<protein>
    <recommendedName>
        <fullName>Lipoteichoic acid synthase</fullName>
    </recommendedName>
    <component>
        <recommendedName>
            <fullName>Glycerol phosphate lipoteichoic acid synthase</fullName>
            <shortName>LTA synthase</shortName>
            <ecNumber>2.7.8.-</ecNumber>
        </recommendedName>
        <alternativeName>
            <fullName>Polyglycerol phosphate synthase</fullName>
        </alternativeName>
    </component>
    <component>
        <recommendedName>
            <fullName>Processed glycerol phosphate lipoteichoic acid synthase</fullName>
        </recommendedName>
    </component>
</protein>
<organism>
    <name type="scientific">Staphylococcus aureus (strain MW2)</name>
    <dbReference type="NCBI Taxonomy" id="196620"/>
    <lineage>
        <taxon>Bacteria</taxon>
        <taxon>Bacillati</taxon>
        <taxon>Bacillota</taxon>
        <taxon>Bacilli</taxon>
        <taxon>Bacillales</taxon>
        <taxon>Staphylococcaceae</taxon>
        <taxon>Staphylococcus</taxon>
    </lineage>
</organism>
<proteinExistence type="evidence at protein level"/>
<evidence type="ECO:0000250" key="1"/>
<evidence type="ECO:0000255" key="2"/>
<evidence type="ECO:0000256" key="3">
    <source>
        <dbReference type="SAM" id="MobiDB-lite"/>
    </source>
</evidence>
<evidence type="ECO:0000269" key="4">
    <source>
    </source>
</evidence>
<evidence type="ECO:0000305" key="5"/>
<evidence type="ECO:0007829" key="6">
    <source>
        <dbReference type="PDB" id="2W5Q"/>
    </source>
</evidence>